<organism>
    <name type="scientific">Cyanidium caldarium</name>
    <name type="common">Red alga</name>
    <dbReference type="NCBI Taxonomy" id="2771"/>
    <lineage>
        <taxon>Eukaryota</taxon>
        <taxon>Rhodophyta</taxon>
        <taxon>Bangiophyceae</taxon>
        <taxon>Cyanidiales</taxon>
        <taxon>Cyanidiaceae</taxon>
        <taxon>Cyanidium</taxon>
    </lineage>
</organism>
<comment type="function">
    <text>Light-harvesting photosynthetic tetrapyrrole chromophore-protein from the phycobiliprotein complex (phycobilisome, PBS). Phycocyanin is the major phycobiliprotein in the PBS rod.</text>
</comment>
<comment type="subunit">
    <text evidence="2">Heterodimer of an alpha and a beta subunit, which further assembles into trimers and the trimers into hexamers. The basic functional unit of phycobiliproteins is a ring-shaped hexamer formed from two back-to-back trimers contacting via the alpha chain subunits. The trimers are composed of alpha/beta subunit heterodimers arranged around a three-fold axis of symmetry. The phycoerythrins also contain a gamma subunit which is located in the center of the hexamer.</text>
</comment>
<comment type="subcellular location">
    <subcellularLocation>
        <location evidence="1">Plastid</location>
        <location evidence="1">Chloroplast thylakoid membrane</location>
        <topology evidence="1">Peripheral membrane protein</topology>
        <orientation evidence="1">Stromal side</orientation>
    </subcellularLocation>
    <text evidence="1">Part of the phycobilisome rod.</text>
</comment>
<comment type="PTM">
    <text evidence="2">Contains two covalently linked phycocyanobilin chromophores.</text>
</comment>
<comment type="miscellaneous">
    <text>The light-harvesting antenna system in red algae and cyanobacteria is formed of phycobilisomes. These are composed of the phycobiliproteins phycoerythrin (CPE), phycocyanin (CPC) and allophycocyanin (APC). Cyanobacteria also contain phycoerythrocyanin (PCC). The phycobiliproteins all share the same subunit composition and organization with variations in the covalently bound open-chain tetrapyrrole chromophores. The phycobiliprotein complexes are arranged sequentially in antenna complexes linked by linker proteins with CPE at the periphery, CPC in the middle and APC at the core feeding to the photosynthetic reaction center.</text>
</comment>
<comment type="similarity">
    <text evidence="3">Belongs to the phycobiliprotein family.</text>
</comment>
<keyword id="KW-0002">3D-structure</keyword>
<keyword id="KW-0042">Antenna complex</keyword>
<keyword id="KW-0089">Bile pigment</keyword>
<keyword id="KW-0150">Chloroplast</keyword>
<keyword id="KW-0157">Chromophore</keyword>
<keyword id="KW-0249">Electron transport</keyword>
<keyword id="KW-0472">Membrane</keyword>
<keyword id="KW-0488">Methylation</keyword>
<keyword id="KW-0602">Photosynthesis</keyword>
<keyword id="KW-0605">Phycobilisome</keyword>
<keyword id="KW-0934">Plastid</keyword>
<keyword id="KW-0793">Thylakoid</keyword>
<keyword id="KW-0813">Transport</keyword>
<name>PHCB_CYACA</name>
<geneLocation type="chloroplast"/>
<dbReference type="EMBL" id="AF022186">
    <property type="protein sequence ID" value="AAB82680.1"/>
    <property type="molecule type" value="Genomic_DNA"/>
</dbReference>
<dbReference type="PIR" id="T11977">
    <property type="entry name" value="T11977"/>
</dbReference>
<dbReference type="RefSeq" id="NP_045081.1">
    <property type="nucleotide sequence ID" value="NC_001840.1"/>
</dbReference>
<dbReference type="PDB" id="6Y3D">
    <property type="method" value="X-ray"/>
    <property type="resolution" value="1.80 A"/>
    <property type="chains" value="BBB/DDD/FFF/HHH/JJJ/LLL=1-172"/>
</dbReference>
<dbReference type="PDBsum" id="6Y3D"/>
<dbReference type="SMR" id="O19909"/>
<dbReference type="GeneID" id="800251"/>
<dbReference type="GO" id="GO:0009535">
    <property type="term" value="C:chloroplast thylakoid membrane"/>
    <property type="evidence" value="ECO:0007669"/>
    <property type="project" value="UniProtKB-SubCell"/>
</dbReference>
<dbReference type="GO" id="GO:0030089">
    <property type="term" value="C:phycobilisome"/>
    <property type="evidence" value="ECO:0007669"/>
    <property type="project" value="UniProtKB-KW"/>
</dbReference>
<dbReference type="GO" id="GO:0015979">
    <property type="term" value="P:photosynthesis"/>
    <property type="evidence" value="ECO:0007669"/>
    <property type="project" value="UniProtKB-KW"/>
</dbReference>
<dbReference type="Gene3D" id="1.10.490.20">
    <property type="entry name" value="Phycocyanins"/>
    <property type="match status" value="1"/>
</dbReference>
<dbReference type="InterPro" id="IPR009050">
    <property type="entry name" value="Globin-like_sf"/>
</dbReference>
<dbReference type="InterPro" id="IPR012128">
    <property type="entry name" value="Phycobilisome_asu/bsu"/>
</dbReference>
<dbReference type="InterPro" id="IPR038719">
    <property type="entry name" value="Phycobilisome_asu/bsu_sf"/>
</dbReference>
<dbReference type="InterPro" id="IPR006247">
    <property type="entry name" value="Phycocyanin_b"/>
</dbReference>
<dbReference type="NCBIfam" id="TIGR01339">
    <property type="entry name" value="phycocy_beta"/>
    <property type="match status" value="1"/>
</dbReference>
<dbReference type="PANTHER" id="PTHR34011:SF7">
    <property type="entry name" value="C-PHYCOCYANIN BETA SUBUNIT"/>
    <property type="match status" value="1"/>
</dbReference>
<dbReference type="PANTHER" id="PTHR34011">
    <property type="entry name" value="PHYCOBILISOME 32.1 KDA LINKER POLYPEPTIDE, PHYCOCYANIN-ASSOCIATED, ROD 2-RELATED"/>
    <property type="match status" value="1"/>
</dbReference>
<dbReference type="Pfam" id="PF00502">
    <property type="entry name" value="Phycobilisome"/>
    <property type="match status" value="1"/>
</dbReference>
<dbReference type="PIRSF" id="PIRSF000081">
    <property type="entry name" value="Phycocyanin"/>
    <property type="match status" value="1"/>
</dbReference>
<dbReference type="SUPFAM" id="SSF46458">
    <property type="entry name" value="Globin-like"/>
    <property type="match status" value="1"/>
</dbReference>
<reference key="1">
    <citation type="journal article" date="2000" name="J. Mol. Evol.">
        <title>The structure and gene repertoire of an ancient red algal plastid genome.</title>
        <authorList>
            <person name="Gloeckner G."/>
            <person name="Rosenthal A."/>
            <person name="Valentin K.-U."/>
        </authorList>
    </citation>
    <scope>NUCLEOTIDE SEQUENCE [LARGE SCALE GENOMIC DNA]</scope>
    <source>
        <strain>RK-1</strain>
    </source>
</reference>
<feature type="chain" id="PRO_0000199148" description="C-phycocyanin beta chain">
    <location>
        <begin position="1"/>
        <end position="172"/>
    </location>
</feature>
<feature type="binding site" evidence="1">
    <location>
        <position position="35"/>
    </location>
    <ligand>
        <name>(2R,3E)-phycocyanobilin</name>
        <dbReference type="ChEBI" id="CHEBI:85275"/>
        <label>1</label>
    </ligand>
</feature>
<feature type="binding site" evidence="1">
    <location>
        <position position="39"/>
    </location>
    <ligand>
        <name>(2R,3E)-phycocyanobilin</name>
        <dbReference type="ChEBI" id="CHEBI:85275"/>
        <label>1</label>
    </ligand>
</feature>
<feature type="binding site" evidence="1">
    <location>
        <position position="72"/>
    </location>
    <ligand>
        <name>(2R,3E)-phycocyanobilin</name>
        <dbReference type="ChEBI" id="CHEBI:85275"/>
        <label>2</label>
    </ligand>
</feature>
<feature type="binding site" evidence="1">
    <location>
        <position position="77"/>
    </location>
    <ligand>
        <name>(2R,3E)-phycocyanobilin</name>
        <dbReference type="ChEBI" id="CHEBI:85275"/>
        <label>2</label>
    </ligand>
</feature>
<feature type="binding site" evidence="1">
    <location>
        <begin position="82"/>
        <end position="88"/>
    </location>
    <ligand>
        <name>(2R,3E)-phycocyanobilin</name>
        <dbReference type="ChEBI" id="CHEBI:85275"/>
        <label>2</label>
    </ligand>
</feature>
<feature type="binding site" description="covalent" evidence="2">
    <location>
        <position position="82"/>
    </location>
    <ligand>
        <name>(2R,3E)-phycocyanobilin</name>
        <dbReference type="ChEBI" id="CHEBI:85275"/>
        <label>2</label>
    </ligand>
</feature>
<feature type="binding site" evidence="1">
    <location>
        <begin position="149"/>
        <end position="151"/>
    </location>
    <ligand>
        <name>(2R,3E)-phycocyanobilin</name>
        <dbReference type="ChEBI" id="CHEBI:85275"/>
        <label>1</label>
    </ligand>
</feature>
<feature type="binding site" description="covalent" evidence="2">
    <location>
        <position position="153"/>
    </location>
    <ligand>
        <name>(2R,3E)-phycocyanobilin</name>
        <dbReference type="ChEBI" id="CHEBI:85275"/>
        <label>1</label>
    </ligand>
</feature>
<feature type="modified residue" description="N4-methylasparagine" evidence="2">
    <location>
        <position position="72"/>
    </location>
</feature>
<evidence type="ECO:0000250" key="1"/>
<evidence type="ECO:0000250" key="2">
    <source>
        <dbReference type="UniProtKB" id="P00311"/>
    </source>
</evidence>
<evidence type="ECO:0000305" key="3"/>
<gene>
    <name type="primary">cpcB</name>
</gene>
<sequence length="172" mass="18174">MLDAFSKVVAQADARGEFLSNTQLDALSKMVADGNKRLDATAAISANAATIVTNAARSLFSEQPQLIQPGGNAYTNRRMAACLRDMEIILRYVSYATIAGDSSVLDDRCLNGLRETYQALGVPGASVALAVEKMKEAAIAFANDSSNVTIGDCSALISEIATYFDRAAKAVV</sequence>
<accession>O19909</accession>
<proteinExistence type="evidence at protein level"/>
<protein>
    <recommendedName>
        <fullName>C-phycocyanin beta chain</fullName>
    </recommendedName>
</protein>